<comment type="function">
    <text evidence="1">Catalyzes the attachment of proline to tRNA(Pro) in a two-step reaction: proline is first activated by ATP to form Pro-AMP and then transferred to the acceptor end of tRNA(Pro). As ProRS can inadvertently accommodate and process non-cognate amino acids such as alanine and cysteine, to avoid such errors it has two additional distinct editing activities against alanine. One activity is designated as 'pretransfer' editing and involves the tRNA(Pro)-independent hydrolysis of activated Ala-AMP. The other activity is designated 'posttransfer' editing and involves deacylation of mischarged Ala-tRNA(Pro). The misacylated Cys-tRNA(Pro) is not edited by ProRS.</text>
</comment>
<comment type="catalytic activity">
    <reaction evidence="1">
        <text>tRNA(Pro) + L-proline + ATP = L-prolyl-tRNA(Pro) + AMP + diphosphate</text>
        <dbReference type="Rhea" id="RHEA:14305"/>
        <dbReference type="Rhea" id="RHEA-COMP:9700"/>
        <dbReference type="Rhea" id="RHEA-COMP:9702"/>
        <dbReference type="ChEBI" id="CHEBI:30616"/>
        <dbReference type="ChEBI" id="CHEBI:33019"/>
        <dbReference type="ChEBI" id="CHEBI:60039"/>
        <dbReference type="ChEBI" id="CHEBI:78442"/>
        <dbReference type="ChEBI" id="CHEBI:78532"/>
        <dbReference type="ChEBI" id="CHEBI:456215"/>
        <dbReference type="EC" id="6.1.1.15"/>
    </reaction>
</comment>
<comment type="subunit">
    <text evidence="1">Homodimer.</text>
</comment>
<comment type="subcellular location">
    <subcellularLocation>
        <location evidence="1">Cytoplasm</location>
    </subcellularLocation>
</comment>
<comment type="domain">
    <text evidence="1">Consists of three domains: the N-terminal catalytic domain, the editing domain and the C-terminal anticodon-binding domain.</text>
</comment>
<comment type="similarity">
    <text evidence="1">Belongs to the class-II aminoacyl-tRNA synthetase family. ProS type 1 subfamily.</text>
</comment>
<dbReference type="EC" id="6.1.1.15" evidence="1"/>
<dbReference type="EMBL" id="BA000003">
    <property type="protein sequence ID" value="BAB12954.1"/>
    <property type="molecule type" value="Genomic_DNA"/>
</dbReference>
<dbReference type="RefSeq" id="NP_240068.1">
    <property type="nucleotide sequence ID" value="NC_002528.1"/>
</dbReference>
<dbReference type="RefSeq" id="WP_010896022.1">
    <property type="nucleotide sequence ID" value="NC_002528.1"/>
</dbReference>
<dbReference type="SMR" id="P57333"/>
<dbReference type="STRING" id="563178.BUAP5A_235"/>
<dbReference type="EnsemblBacteria" id="BAB12954">
    <property type="protein sequence ID" value="BAB12954"/>
    <property type="gene ID" value="BAB12954"/>
</dbReference>
<dbReference type="KEGG" id="buc:BU239"/>
<dbReference type="PATRIC" id="fig|107806.10.peg.252"/>
<dbReference type="eggNOG" id="COG0442">
    <property type="taxonomic scope" value="Bacteria"/>
</dbReference>
<dbReference type="HOGENOM" id="CLU_016739_0_0_6"/>
<dbReference type="Proteomes" id="UP000001806">
    <property type="component" value="Chromosome"/>
</dbReference>
<dbReference type="GO" id="GO:0005829">
    <property type="term" value="C:cytosol"/>
    <property type="evidence" value="ECO:0007669"/>
    <property type="project" value="TreeGrafter"/>
</dbReference>
<dbReference type="GO" id="GO:0002161">
    <property type="term" value="F:aminoacyl-tRNA deacylase activity"/>
    <property type="evidence" value="ECO:0007669"/>
    <property type="project" value="InterPro"/>
</dbReference>
<dbReference type="GO" id="GO:0005524">
    <property type="term" value="F:ATP binding"/>
    <property type="evidence" value="ECO:0007669"/>
    <property type="project" value="UniProtKB-UniRule"/>
</dbReference>
<dbReference type="GO" id="GO:0004827">
    <property type="term" value="F:proline-tRNA ligase activity"/>
    <property type="evidence" value="ECO:0007669"/>
    <property type="project" value="UniProtKB-UniRule"/>
</dbReference>
<dbReference type="GO" id="GO:0006433">
    <property type="term" value="P:prolyl-tRNA aminoacylation"/>
    <property type="evidence" value="ECO:0007669"/>
    <property type="project" value="UniProtKB-UniRule"/>
</dbReference>
<dbReference type="CDD" id="cd04334">
    <property type="entry name" value="ProRS-INS"/>
    <property type="match status" value="1"/>
</dbReference>
<dbReference type="CDD" id="cd00861">
    <property type="entry name" value="ProRS_anticodon_short"/>
    <property type="match status" value="1"/>
</dbReference>
<dbReference type="CDD" id="cd00779">
    <property type="entry name" value="ProRS_core_prok"/>
    <property type="match status" value="1"/>
</dbReference>
<dbReference type="Gene3D" id="3.40.50.800">
    <property type="entry name" value="Anticodon-binding domain"/>
    <property type="match status" value="1"/>
</dbReference>
<dbReference type="Gene3D" id="3.30.930.10">
    <property type="entry name" value="Bira Bifunctional Protein, Domain 2"/>
    <property type="match status" value="2"/>
</dbReference>
<dbReference type="HAMAP" id="MF_01569">
    <property type="entry name" value="Pro_tRNA_synth_type1"/>
    <property type="match status" value="1"/>
</dbReference>
<dbReference type="InterPro" id="IPR002314">
    <property type="entry name" value="aa-tRNA-synt_IIb"/>
</dbReference>
<dbReference type="InterPro" id="IPR006195">
    <property type="entry name" value="aa-tRNA-synth_II"/>
</dbReference>
<dbReference type="InterPro" id="IPR045864">
    <property type="entry name" value="aa-tRNA-synth_II/BPL/LPL"/>
</dbReference>
<dbReference type="InterPro" id="IPR004154">
    <property type="entry name" value="Anticodon-bd"/>
</dbReference>
<dbReference type="InterPro" id="IPR036621">
    <property type="entry name" value="Anticodon-bd_dom_sf"/>
</dbReference>
<dbReference type="InterPro" id="IPR002316">
    <property type="entry name" value="Pro-tRNA-ligase_IIa"/>
</dbReference>
<dbReference type="InterPro" id="IPR004500">
    <property type="entry name" value="Pro-tRNA-synth_IIa_bac-type"/>
</dbReference>
<dbReference type="InterPro" id="IPR023717">
    <property type="entry name" value="Pro-tRNA-Synthase_IIa_type1"/>
</dbReference>
<dbReference type="InterPro" id="IPR050062">
    <property type="entry name" value="Pro-tRNA_synthetase"/>
</dbReference>
<dbReference type="InterPro" id="IPR044140">
    <property type="entry name" value="ProRS_anticodon_short"/>
</dbReference>
<dbReference type="InterPro" id="IPR033730">
    <property type="entry name" value="ProRS_core_prok"/>
</dbReference>
<dbReference type="InterPro" id="IPR036754">
    <property type="entry name" value="YbaK/aa-tRNA-synt-asso_dom_sf"/>
</dbReference>
<dbReference type="InterPro" id="IPR007214">
    <property type="entry name" value="YbaK/aa-tRNA-synth-assoc-dom"/>
</dbReference>
<dbReference type="NCBIfam" id="NF006625">
    <property type="entry name" value="PRK09194.1"/>
    <property type="match status" value="1"/>
</dbReference>
<dbReference type="NCBIfam" id="TIGR00409">
    <property type="entry name" value="proS_fam_II"/>
    <property type="match status" value="1"/>
</dbReference>
<dbReference type="PANTHER" id="PTHR42753">
    <property type="entry name" value="MITOCHONDRIAL RIBOSOME PROTEIN L39/PROLYL-TRNA LIGASE FAMILY MEMBER"/>
    <property type="match status" value="1"/>
</dbReference>
<dbReference type="PANTHER" id="PTHR42753:SF2">
    <property type="entry name" value="PROLINE--TRNA LIGASE"/>
    <property type="match status" value="1"/>
</dbReference>
<dbReference type="Pfam" id="PF03129">
    <property type="entry name" value="HGTP_anticodon"/>
    <property type="match status" value="1"/>
</dbReference>
<dbReference type="Pfam" id="PF00587">
    <property type="entry name" value="tRNA-synt_2b"/>
    <property type="match status" value="1"/>
</dbReference>
<dbReference type="Pfam" id="PF04073">
    <property type="entry name" value="tRNA_edit"/>
    <property type="match status" value="1"/>
</dbReference>
<dbReference type="PRINTS" id="PR01046">
    <property type="entry name" value="TRNASYNTHPRO"/>
</dbReference>
<dbReference type="SUPFAM" id="SSF52954">
    <property type="entry name" value="Class II aaRS ABD-related"/>
    <property type="match status" value="1"/>
</dbReference>
<dbReference type="SUPFAM" id="SSF55681">
    <property type="entry name" value="Class II aaRS and biotin synthetases"/>
    <property type="match status" value="1"/>
</dbReference>
<dbReference type="SUPFAM" id="SSF55826">
    <property type="entry name" value="YbaK/ProRS associated domain"/>
    <property type="match status" value="1"/>
</dbReference>
<dbReference type="PROSITE" id="PS50862">
    <property type="entry name" value="AA_TRNA_LIGASE_II"/>
    <property type="match status" value="1"/>
</dbReference>
<proteinExistence type="inferred from homology"/>
<keyword id="KW-0030">Aminoacyl-tRNA synthetase</keyword>
<keyword id="KW-0067">ATP-binding</keyword>
<keyword id="KW-0963">Cytoplasm</keyword>
<keyword id="KW-0436">Ligase</keyword>
<keyword id="KW-0547">Nucleotide-binding</keyword>
<keyword id="KW-0648">Protein biosynthesis</keyword>
<keyword id="KW-1185">Reference proteome</keyword>
<protein>
    <recommendedName>
        <fullName evidence="1">Proline--tRNA ligase</fullName>
        <ecNumber evidence="1">6.1.1.15</ecNumber>
    </recommendedName>
    <alternativeName>
        <fullName evidence="1">Prolyl-tRNA synthetase</fullName>
        <shortName evidence="1">ProRS</shortName>
    </alternativeName>
</protein>
<organism>
    <name type="scientific">Buchnera aphidicola subsp. Acyrthosiphon pisum (strain APS)</name>
    <name type="common">Acyrthosiphon pisum symbiotic bacterium</name>
    <dbReference type="NCBI Taxonomy" id="107806"/>
    <lineage>
        <taxon>Bacteria</taxon>
        <taxon>Pseudomonadati</taxon>
        <taxon>Pseudomonadota</taxon>
        <taxon>Gammaproteobacteria</taxon>
        <taxon>Enterobacterales</taxon>
        <taxon>Erwiniaceae</taxon>
        <taxon>Buchnera</taxon>
    </lineage>
</organism>
<evidence type="ECO:0000255" key="1">
    <source>
        <dbReference type="HAMAP-Rule" id="MF_01569"/>
    </source>
</evidence>
<accession>P57333</accession>
<reference key="1">
    <citation type="journal article" date="2000" name="Nature">
        <title>Genome sequence of the endocellular bacterial symbiont of aphids Buchnera sp. APS.</title>
        <authorList>
            <person name="Shigenobu S."/>
            <person name="Watanabe H."/>
            <person name="Hattori M."/>
            <person name="Sakaki Y."/>
            <person name="Ishikawa H."/>
        </authorList>
    </citation>
    <scope>NUCLEOTIDE SEQUENCE [LARGE SCALE GENOMIC DNA]</scope>
    <source>
        <strain>APS</strain>
    </source>
</reference>
<name>SYP_BUCAI</name>
<gene>
    <name evidence="1" type="primary">proS</name>
    <name type="ordered locus">BU239</name>
</gene>
<sequence>MLTSQYLLSTSKDIPYDAKIISHQLMIRSGMIRKTSSGLYVWLPTGMRVLKKIKNIITTEMEKINALEILMPIIQPEYLWKESRRLNLYGEELLRFLDRRKNQFILGPTNEEVVTNFIGSEIHSYKQLPLTVYQIQTKFRDEIRPRFGIIRTREFTMKDAYSFHINQSCLENTYNKFYDSYINIFKKMNLNFCAVKADSGSMGGNISHEFQAFSQNGEDEIVFSNDKLYSSNMNMAESIETIDFFKKKYSSCLIKNKTNTKKSIIMSEKLNTPLINQIQTFLIQTKINDITSIAALLIRGDHELNFFKVEKIDIINKPLVFLNEKEVISLIGVKKEFLGPLGLKVPIIADISTFNMKNFTIGSNINKHFFINVNWNIDLPMPIFKDIRKVTKNDLSPNGSGYLNIKQSIEIGHIFQLGQKYSRKIQQSVKIKNGNLKNLYMGCYGIGITRIAAAVIEQHHDKNGIIWPDSIAPFEVVILPINMKKDNKIKIIAHFLYKKFKKTGIDVILDDRDERPGVMFNEVDLIGIPHQIIISKRSINYDNVEYRERKNKENILINIKDIKNFIIQKLKK</sequence>
<feature type="chain" id="PRO_0000139322" description="Proline--tRNA ligase">
    <location>
        <begin position="1"/>
        <end position="572"/>
    </location>
</feature>